<keyword id="KW-0285">Flavoprotein</keyword>
<keyword id="KW-0288">FMN</keyword>
<keyword id="KW-0520">NAD</keyword>
<keyword id="KW-0521">NADP</keyword>
<keyword id="KW-0560">Oxidoreductase</keyword>
<keyword id="KW-1185">Reference proteome</keyword>
<protein>
    <recommendedName>
        <fullName>Enoate reductase 1</fullName>
    </recommendedName>
    <alternativeName>
        <fullName>2-enoate reductase</fullName>
        <shortName>ER</shortName>
        <ecNumber>1.3.1.31</ecNumber>
    </alternativeName>
    <alternativeName>
        <fullName>Old yellow enzyme 1</fullName>
    </alternativeName>
</protein>
<comment type="function">
    <text>Enoate reductase with broad substrate specificity for different alpha,beta-unsaturated carbonyl compounds. Prefers NADPH over NADH as cofactor.</text>
</comment>
<comment type="catalytic activity">
    <reaction evidence="2">
        <text>butanoate + NAD(+) = (2E)-2-butenoate + NADH + H(+)</text>
        <dbReference type="Rhea" id="RHEA:10200"/>
        <dbReference type="ChEBI" id="CHEBI:15378"/>
        <dbReference type="ChEBI" id="CHEBI:17968"/>
        <dbReference type="ChEBI" id="CHEBI:35899"/>
        <dbReference type="ChEBI" id="CHEBI:57540"/>
        <dbReference type="ChEBI" id="CHEBI:57945"/>
        <dbReference type="EC" id="1.3.1.31"/>
    </reaction>
</comment>
<comment type="cofactor">
    <cofactor>
        <name>FMN</name>
        <dbReference type="ChEBI" id="CHEBI:58210"/>
    </cofactor>
</comment>
<comment type="subunit">
    <text>Homodimer or heterodimer.</text>
</comment>
<comment type="similarity">
    <text evidence="3">Belongs to the NADH:flavin oxidoreductase/NADH oxidase family.</text>
</comment>
<reference key="1">
    <citation type="journal article" date="1995" name="Yeast">
        <title>Nucleotide sequence and chromosomal localization of the gene encoding the Old Yellow Enzyme from Kluyveromyces lactis.</title>
        <authorList>
            <person name="Miranda M."/>
            <person name="Ramirez J."/>
            <person name="Guevara S."/>
            <person name="Ongay-Larios L."/>
            <person name="Pena A."/>
            <person name="Coria R."/>
        </authorList>
    </citation>
    <scope>NUCLEOTIDE SEQUENCE [GENOMIC DNA]</scope>
    <source>
        <strain>ATCC 8585 / CBS 2359 / DSM 70799 / NBRC 1267 / NRRL Y-1140 / WM37</strain>
    </source>
</reference>
<reference key="2">
    <citation type="journal article" date="2004" name="Nature">
        <title>Genome evolution in yeasts.</title>
        <authorList>
            <person name="Dujon B."/>
            <person name="Sherman D."/>
            <person name="Fischer G."/>
            <person name="Durrens P."/>
            <person name="Casaregola S."/>
            <person name="Lafontaine I."/>
            <person name="de Montigny J."/>
            <person name="Marck C."/>
            <person name="Neuveglise C."/>
            <person name="Talla E."/>
            <person name="Goffard N."/>
            <person name="Frangeul L."/>
            <person name="Aigle M."/>
            <person name="Anthouard V."/>
            <person name="Babour A."/>
            <person name="Barbe V."/>
            <person name="Barnay S."/>
            <person name="Blanchin S."/>
            <person name="Beckerich J.-M."/>
            <person name="Beyne E."/>
            <person name="Bleykasten C."/>
            <person name="Boisrame A."/>
            <person name="Boyer J."/>
            <person name="Cattolico L."/>
            <person name="Confanioleri F."/>
            <person name="de Daruvar A."/>
            <person name="Despons L."/>
            <person name="Fabre E."/>
            <person name="Fairhead C."/>
            <person name="Ferry-Dumazet H."/>
            <person name="Groppi A."/>
            <person name="Hantraye F."/>
            <person name="Hennequin C."/>
            <person name="Jauniaux N."/>
            <person name="Joyet P."/>
            <person name="Kachouri R."/>
            <person name="Kerrest A."/>
            <person name="Koszul R."/>
            <person name="Lemaire M."/>
            <person name="Lesur I."/>
            <person name="Ma L."/>
            <person name="Muller H."/>
            <person name="Nicaud J.-M."/>
            <person name="Nikolski M."/>
            <person name="Oztas S."/>
            <person name="Ozier-Kalogeropoulos O."/>
            <person name="Pellenz S."/>
            <person name="Potier S."/>
            <person name="Richard G.-F."/>
            <person name="Straub M.-L."/>
            <person name="Suleau A."/>
            <person name="Swennen D."/>
            <person name="Tekaia F."/>
            <person name="Wesolowski-Louvel M."/>
            <person name="Westhof E."/>
            <person name="Wirth B."/>
            <person name="Zeniou-Meyer M."/>
            <person name="Zivanovic Y."/>
            <person name="Bolotin-Fukuhara M."/>
            <person name="Thierry A."/>
            <person name="Bouchier C."/>
            <person name="Caudron B."/>
            <person name="Scarpelli C."/>
            <person name="Gaillardin C."/>
            <person name="Weissenbach J."/>
            <person name="Wincker P."/>
            <person name="Souciet J.-L."/>
        </authorList>
    </citation>
    <scope>NUCLEOTIDE SEQUENCE [LARGE SCALE GENOMIC DNA]</scope>
    <source>
        <strain>ATCC 8585 / CBS 2359 / DSM 70799 / NBRC 1267 / NRRL Y-1140 / WM37</strain>
    </source>
</reference>
<reference key="3">
    <citation type="journal article" date="2007" name="Adv. Synth. Catal.">
        <title>Comparison of three enoate reductases and their potential use for biotransformations.</title>
        <authorList>
            <person name="Chaparro-Riggers J.F."/>
            <person name="Rogers T.A."/>
            <person name="Vazquez-Figueroa E."/>
            <person name="Polizzi K.M."/>
            <person name="Bommarius A.S."/>
        </authorList>
    </citation>
    <scope>CATALYTIC ACTIVITY</scope>
    <scope>SUBSTRATE SPECIFICITY</scope>
</reference>
<feature type="chain" id="PRO_0000194476" description="Enoate reductase 1">
    <location>
        <begin position="1"/>
        <end position="398"/>
    </location>
</feature>
<feature type="active site" description="Proton donor" evidence="1">
    <location>
        <position position="196"/>
    </location>
</feature>
<feature type="binding site" evidence="1">
    <location>
        <position position="37"/>
    </location>
    <ligand>
        <name>FMN</name>
        <dbReference type="ChEBI" id="CHEBI:58210"/>
    </ligand>
</feature>
<feature type="binding site" evidence="1">
    <location>
        <position position="191"/>
    </location>
    <ligand>
        <name>FMN</name>
        <dbReference type="ChEBI" id="CHEBI:58210"/>
    </ligand>
</feature>
<feature type="binding site" evidence="1">
    <location>
        <position position="191"/>
    </location>
    <ligand>
        <name>substrate</name>
    </ligand>
</feature>
<feature type="binding site" evidence="1">
    <location>
        <position position="194"/>
    </location>
    <ligand>
        <name>substrate</name>
    </ligand>
</feature>
<feature type="binding site" evidence="1">
    <location>
        <position position="243"/>
    </location>
    <ligand>
        <name>FMN</name>
        <dbReference type="ChEBI" id="CHEBI:58210"/>
    </ligand>
</feature>
<feature type="binding site" evidence="1">
    <location>
        <position position="348"/>
    </location>
    <ligand>
        <name>FMN</name>
        <dbReference type="ChEBI" id="CHEBI:58210"/>
    </ligand>
</feature>
<feature type="binding site" evidence="1">
    <location>
        <position position="375"/>
    </location>
    <ligand>
        <name>substrate</name>
    </ligand>
</feature>
<feature type="sequence conflict" description="In Ref. 1; AAA98815." evidence="3" ref="1">
    <original>G</original>
    <variation>V</variation>
    <location>
        <position position="256"/>
    </location>
</feature>
<evidence type="ECO:0000250" key="1"/>
<evidence type="ECO:0000269" key="2">
    <source ref="3"/>
</evidence>
<evidence type="ECO:0000305" key="3"/>
<sequence>MSFMNFEPKPLADTDIFKPIKIGNTELKHRVVMPALTRMRALHPGNVPNPDWAVEYYRQRSQYPGTMIITEGAFPSAQSGGYDNAPGVWSEEQLAQWRKIFKAIHDNKSFVWVQLWVLGRQAFADNLARDGLRYDSASDEVYMGEDEKERAIRSNNPQHGITKDEIKQYIRDYVDAAKKCIDAGADGVEIHSANGYLLNQFLDPISNKRTDEYGGSIENRARFVLEVVDAVVDAVGAERTSIRFSPYGVFGTMSGGSDPVLVAQFAYVLAELEKRAKAGKRLAYVDLVEPRVTSPFQPEFEGWYKGGTNEFVYSVWKGNVLRVGNYALDPDAAITDSKNPNTLIGYGRAFIANPDLVERLEKGLPLNQYDRPSFYKMSAEGYIDYPTYEEAVAKGYKK</sequence>
<proteinExistence type="evidence at protein level"/>
<organism>
    <name type="scientific">Kluyveromyces lactis (strain ATCC 8585 / CBS 2359 / DSM 70799 / NBRC 1267 / NRRL Y-1140 / WM37)</name>
    <name type="common">Yeast</name>
    <name type="synonym">Candida sphaerica</name>
    <dbReference type="NCBI Taxonomy" id="284590"/>
    <lineage>
        <taxon>Eukaryota</taxon>
        <taxon>Fungi</taxon>
        <taxon>Dikarya</taxon>
        <taxon>Ascomycota</taxon>
        <taxon>Saccharomycotina</taxon>
        <taxon>Saccharomycetes</taxon>
        <taxon>Saccharomycetales</taxon>
        <taxon>Saccharomycetaceae</taxon>
        <taxon>Kluyveromyces</taxon>
    </lineage>
</organism>
<name>KYE1_KLULA</name>
<gene>
    <name type="primary">KYE1</name>
    <name type="ordered locus">KLLA0A09075g</name>
</gene>
<accession>P40952</accession>
<accession>Q6CXE2</accession>
<dbReference type="EC" id="1.3.1.31"/>
<dbReference type="EMBL" id="L37452">
    <property type="protein sequence ID" value="AAA98815.1"/>
    <property type="molecule type" value="Genomic_DNA"/>
</dbReference>
<dbReference type="EMBL" id="CR382121">
    <property type="protein sequence ID" value="CAH02985.1"/>
    <property type="molecule type" value="Genomic_DNA"/>
</dbReference>
<dbReference type="PIR" id="S55844">
    <property type="entry name" value="S55844"/>
</dbReference>
<dbReference type="RefSeq" id="XP_451397.1">
    <property type="nucleotide sequence ID" value="XM_451397.1"/>
</dbReference>
<dbReference type="SMR" id="P40952"/>
<dbReference type="FunCoup" id="P40952">
    <property type="interactions" value="918"/>
</dbReference>
<dbReference type="STRING" id="284590.P40952"/>
<dbReference type="PaxDb" id="284590-P40952"/>
<dbReference type="KEGG" id="kla:KLLA0_A09075g"/>
<dbReference type="eggNOG" id="KOG0134">
    <property type="taxonomic scope" value="Eukaryota"/>
</dbReference>
<dbReference type="HOGENOM" id="CLU_012153_0_0_1"/>
<dbReference type="InParanoid" id="P40952"/>
<dbReference type="OMA" id="LTRCMAG"/>
<dbReference type="BRENDA" id="1.3.1.31">
    <property type="organism ID" value="2825"/>
</dbReference>
<dbReference type="Proteomes" id="UP000000598">
    <property type="component" value="Chromosome A"/>
</dbReference>
<dbReference type="GO" id="GO:0047540">
    <property type="term" value="F:2-enoate reductase activity"/>
    <property type="evidence" value="ECO:0007669"/>
    <property type="project" value="UniProtKB-EC"/>
</dbReference>
<dbReference type="GO" id="GO:0010181">
    <property type="term" value="F:FMN binding"/>
    <property type="evidence" value="ECO:0007669"/>
    <property type="project" value="InterPro"/>
</dbReference>
<dbReference type="GO" id="GO:0003959">
    <property type="term" value="F:NADPH dehydrogenase activity"/>
    <property type="evidence" value="ECO:0007669"/>
    <property type="project" value="TreeGrafter"/>
</dbReference>
<dbReference type="CDD" id="cd02933">
    <property type="entry name" value="OYE_like_FMN"/>
    <property type="match status" value="1"/>
</dbReference>
<dbReference type="FunFam" id="3.20.20.70:FF:000138">
    <property type="entry name" value="NADPH dehydrogenase 1"/>
    <property type="match status" value="1"/>
</dbReference>
<dbReference type="Gene3D" id="3.20.20.70">
    <property type="entry name" value="Aldolase class I"/>
    <property type="match status" value="1"/>
</dbReference>
<dbReference type="InterPro" id="IPR013785">
    <property type="entry name" value="Aldolase_TIM"/>
</dbReference>
<dbReference type="InterPro" id="IPR001155">
    <property type="entry name" value="OxRdtase_FMN_N"/>
</dbReference>
<dbReference type="InterPro" id="IPR045247">
    <property type="entry name" value="Oye-like"/>
</dbReference>
<dbReference type="PANTHER" id="PTHR22893">
    <property type="entry name" value="NADH OXIDOREDUCTASE-RELATED"/>
    <property type="match status" value="1"/>
</dbReference>
<dbReference type="PANTHER" id="PTHR22893:SF91">
    <property type="entry name" value="NADPH DEHYDROGENASE 2-RELATED"/>
    <property type="match status" value="1"/>
</dbReference>
<dbReference type="Pfam" id="PF00724">
    <property type="entry name" value="Oxidored_FMN"/>
    <property type="match status" value="1"/>
</dbReference>
<dbReference type="SUPFAM" id="SSF51395">
    <property type="entry name" value="FMN-linked oxidoreductases"/>
    <property type="match status" value="1"/>
</dbReference>